<accession>P0CU07</accession>
<accession>Q9P332</accession>
<gene>
    <name type="ORF">SPAC977.02</name>
</gene>
<comment type="subcellular location">
    <subcellularLocation>
        <location evidence="2">Cytoplasm</location>
    </subcellularLocation>
    <subcellularLocation>
        <location evidence="2">Nucleus membrane</location>
        <topology evidence="3">Single-pass membrane protein</topology>
    </subcellularLocation>
    <text evidence="2">Localizes to cytoplasmic dots and the nuclear envelope.</text>
</comment>
<comment type="similarity">
    <text evidence="3">Belongs to the UPF0742 family.</text>
</comment>
<protein>
    <recommendedName>
        <fullName>UPF0742 protein SPAC977.02</fullName>
    </recommendedName>
</protein>
<name>YI72_SCHPO</name>
<keyword id="KW-0963">Cytoplasm</keyword>
<keyword id="KW-0472">Membrane</keyword>
<keyword id="KW-0539">Nucleus</keyword>
<keyword id="KW-1185">Reference proteome</keyword>
<keyword id="KW-0812">Transmembrane</keyword>
<keyword id="KW-1133">Transmembrane helix</keyword>
<proteinExistence type="inferred from homology"/>
<feature type="chain" id="PRO_0000437230" description="UPF0742 protein SPAC977.02">
    <location>
        <begin position="1"/>
        <end position="146"/>
    </location>
</feature>
<feature type="transmembrane region" description="Helical" evidence="1">
    <location>
        <begin position="38"/>
        <end position="60"/>
    </location>
</feature>
<dbReference type="EMBL" id="CU329670">
    <property type="protein sequence ID" value="CAB69624.1"/>
    <property type="molecule type" value="Genomic_DNA"/>
</dbReference>
<dbReference type="PIR" id="T50275">
    <property type="entry name" value="T50275"/>
</dbReference>
<dbReference type="PaxDb" id="4896-SPAC750.04c.1"/>
<dbReference type="EnsemblFungi" id="SPAC750.04c.1">
    <property type="protein sequence ID" value="SPAC750.04c.1:pep"/>
    <property type="gene ID" value="SPAC750.04c"/>
</dbReference>
<dbReference type="EnsemblFungi" id="SPAC977.02.1">
    <property type="protein sequence ID" value="SPAC977.02.1:pep"/>
    <property type="gene ID" value="SPAC977.02"/>
</dbReference>
<dbReference type="KEGG" id="spo:2542627"/>
<dbReference type="KEGG" id="spo:2543349"/>
<dbReference type="PomBase" id="SPAC977.02"/>
<dbReference type="VEuPathDB" id="FungiDB:SPAC750.04c"/>
<dbReference type="VEuPathDB" id="FungiDB:SPAC977.02"/>
<dbReference type="InParanoid" id="P0CU07"/>
<dbReference type="PhylomeDB" id="P0CU07"/>
<dbReference type="PRO" id="PR:P0CU07"/>
<dbReference type="Proteomes" id="UP000002485">
    <property type="component" value="Chromosome I"/>
</dbReference>
<dbReference type="GO" id="GO:0005737">
    <property type="term" value="C:cytoplasm"/>
    <property type="evidence" value="ECO:0007669"/>
    <property type="project" value="UniProtKB-SubCell"/>
</dbReference>
<dbReference type="GO" id="GO:0012505">
    <property type="term" value="C:endomembrane system"/>
    <property type="evidence" value="ECO:0000314"/>
    <property type="project" value="PomBase"/>
</dbReference>
<dbReference type="GO" id="GO:0031965">
    <property type="term" value="C:nuclear membrane"/>
    <property type="evidence" value="ECO:0007669"/>
    <property type="project" value="UniProtKB-SubCell"/>
</dbReference>
<dbReference type="InterPro" id="IPR018291">
    <property type="entry name" value="5TM-prot_SCHPO"/>
</dbReference>
<dbReference type="Pfam" id="PF09437">
    <property type="entry name" value="Pombe_5TM"/>
    <property type="match status" value="2"/>
</dbReference>
<evidence type="ECO:0000255" key="1"/>
<evidence type="ECO:0000269" key="2">
    <source>
    </source>
</evidence>
<evidence type="ECO:0000305" key="3"/>
<organism>
    <name type="scientific">Schizosaccharomyces pombe (strain 972 / ATCC 24843)</name>
    <name type="common">Fission yeast</name>
    <dbReference type="NCBI Taxonomy" id="284812"/>
    <lineage>
        <taxon>Eukaryota</taxon>
        <taxon>Fungi</taxon>
        <taxon>Dikarya</taxon>
        <taxon>Ascomycota</taxon>
        <taxon>Taphrinomycotina</taxon>
        <taxon>Schizosaccharomycetes</taxon>
        <taxon>Schizosaccharomycetales</taxon>
        <taxon>Schizosaccharomycetaceae</taxon>
        <taxon>Schizosaccharomyces</taxon>
    </lineage>
</organism>
<sequence>MALLKKINTQVNRIMKNSSLVQNICFDRVPLFIPRLSLTVKYCLAVKLLIYLLYCWYIYSEVPSASSKFRSFTFGCVVVYHNKFFPRFIRTHSINSIRTFSKFQVIILFSIEKVTRSESKNHSYSKTDISDLHQGYNNPPSRFISR</sequence>
<reference key="1">
    <citation type="journal article" date="2002" name="Nature">
        <title>The genome sequence of Schizosaccharomyces pombe.</title>
        <authorList>
            <person name="Wood V."/>
            <person name="Gwilliam R."/>
            <person name="Rajandream M.A."/>
            <person name="Lyne M.H."/>
            <person name="Lyne R."/>
            <person name="Stewart A."/>
            <person name="Sgouros J.G."/>
            <person name="Peat N."/>
            <person name="Hayles J."/>
            <person name="Baker S.G."/>
            <person name="Basham D."/>
            <person name="Bowman S."/>
            <person name="Brooks K."/>
            <person name="Brown D."/>
            <person name="Brown S."/>
            <person name="Chillingworth T."/>
            <person name="Churcher C.M."/>
            <person name="Collins M."/>
            <person name="Connor R."/>
            <person name="Cronin A."/>
            <person name="Davis P."/>
            <person name="Feltwell T."/>
            <person name="Fraser A."/>
            <person name="Gentles S."/>
            <person name="Goble A."/>
            <person name="Hamlin N."/>
            <person name="Harris D.E."/>
            <person name="Hidalgo J."/>
            <person name="Hodgson G."/>
            <person name="Holroyd S."/>
            <person name="Hornsby T."/>
            <person name="Howarth S."/>
            <person name="Huckle E.J."/>
            <person name="Hunt S."/>
            <person name="Jagels K."/>
            <person name="James K.D."/>
            <person name="Jones L."/>
            <person name="Jones M."/>
            <person name="Leather S."/>
            <person name="McDonald S."/>
            <person name="McLean J."/>
            <person name="Mooney P."/>
            <person name="Moule S."/>
            <person name="Mungall K.L."/>
            <person name="Murphy L.D."/>
            <person name="Niblett D."/>
            <person name="Odell C."/>
            <person name="Oliver K."/>
            <person name="O'Neil S."/>
            <person name="Pearson D."/>
            <person name="Quail M.A."/>
            <person name="Rabbinowitsch E."/>
            <person name="Rutherford K.M."/>
            <person name="Rutter S."/>
            <person name="Saunders D."/>
            <person name="Seeger K."/>
            <person name="Sharp S."/>
            <person name="Skelton J."/>
            <person name="Simmonds M.N."/>
            <person name="Squares R."/>
            <person name="Squares S."/>
            <person name="Stevens K."/>
            <person name="Taylor K."/>
            <person name="Taylor R.G."/>
            <person name="Tivey A."/>
            <person name="Walsh S.V."/>
            <person name="Warren T."/>
            <person name="Whitehead S."/>
            <person name="Woodward J.R."/>
            <person name="Volckaert G."/>
            <person name="Aert R."/>
            <person name="Robben J."/>
            <person name="Grymonprez B."/>
            <person name="Weltjens I."/>
            <person name="Vanstreels E."/>
            <person name="Rieger M."/>
            <person name="Schaefer M."/>
            <person name="Mueller-Auer S."/>
            <person name="Gabel C."/>
            <person name="Fuchs M."/>
            <person name="Duesterhoeft A."/>
            <person name="Fritzc C."/>
            <person name="Holzer E."/>
            <person name="Moestl D."/>
            <person name="Hilbert H."/>
            <person name="Borzym K."/>
            <person name="Langer I."/>
            <person name="Beck A."/>
            <person name="Lehrach H."/>
            <person name="Reinhardt R."/>
            <person name="Pohl T.M."/>
            <person name="Eger P."/>
            <person name="Zimmermann W."/>
            <person name="Wedler H."/>
            <person name="Wambutt R."/>
            <person name="Purnelle B."/>
            <person name="Goffeau A."/>
            <person name="Cadieu E."/>
            <person name="Dreano S."/>
            <person name="Gloux S."/>
            <person name="Lelaure V."/>
            <person name="Mottier S."/>
            <person name="Galibert F."/>
            <person name="Aves S.J."/>
            <person name="Xiang Z."/>
            <person name="Hunt C."/>
            <person name="Moore K."/>
            <person name="Hurst S.M."/>
            <person name="Lucas M."/>
            <person name="Rochet M."/>
            <person name="Gaillardin C."/>
            <person name="Tallada V.A."/>
            <person name="Garzon A."/>
            <person name="Thode G."/>
            <person name="Daga R.R."/>
            <person name="Cruzado L."/>
            <person name="Jimenez J."/>
            <person name="Sanchez M."/>
            <person name="del Rey F."/>
            <person name="Benito J."/>
            <person name="Dominguez A."/>
            <person name="Revuelta J.L."/>
            <person name="Moreno S."/>
            <person name="Armstrong J."/>
            <person name="Forsburg S.L."/>
            <person name="Cerutti L."/>
            <person name="Lowe T."/>
            <person name="McCombie W.R."/>
            <person name="Paulsen I."/>
            <person name="Potashkin J."/>
            <person name="Shpakovski G.V."/>
            <person name="Ussery D."/>
            <person name="Barrell B.G."/>
            <person name="Nurse P."/>
        </authorList>
    </citation>
    <scope>NUCLEOTIDE SEQUENCE [LARGE SCALE GENOMIC DNA]</scope>
    <source>
        <strain>972 / ATCC 24843</strain>
    </source>
</reference>
<reference key="2">
    <citation type="journal article" date="2006" name="Nat. Biotechnol.">
        <title>ORFeome cloning and global analysis of protein localization in the fission yeast Schizosaccharomyces pombe.</title>
        <authorList>
            <person name="Matsuyama A."/>
            <person name="Arai R."/>
            <person name="Yashiroda Y."/>
            <person name="Shirai A."/>
            <person name="Kamata A."/>
            <person name="Sekido S."/>
            <person name="Kobayashi Y."/>
            <person name="Hashimoto A."/>
            <person name="Hamamoto M."/>
            <person name="Hiraoka Y."/>
            <person name="Horinouchi S."/>
            <person name="Yoshida M."/>
        </authorList>
    </citation>
    <scope>SUBCELLULAR LOCATION [LARGE SCALE ANALYSIS]</scope>
</reference>